<organism>
    <name type="scientific">Salmonella paratyphi B (strain ATCC BAA-1250 / SPB7)</name>
    <dbReference type="NCBI Taxonomy" id="1016998"/>
    <lineage>
        <taxon>Bacteria</taxon>
        <taxon>Pseudomonadati</taxon>
        <taxon>Pseudomonadota</taxon>
        <taxon>Gammaproteobacteria</taxon>
        <taxon>Enterobacterales</taxon>
        <taxon>Enterobacteriaceae</taxon>
        <taxon>Salmonella</taxon>
    </lineage>
</organism>
<feature type="chain" id="PRO_0000348395" description="Glyoxylate/hydroxypyruvate reductase B">
    <location>
        <begin position="1"/>
        <end position="324"/>
    </location>
</feature>
<feature type="active site" evidence="1">
    <location>
        <position position="237"/>
    </location>
</feature>
<feature type="active site" evidence="1">
    <location>
        <position position="266"/>
    </location>
</feature>
<feature type="active site" description="Proton donor" evidence="1">
    <location>
        <position position="285"/>
    </location>
</feature>
<evidence type="ECO:0000255" key="1">
    <source>
        <dbReference type="HAMAP-Rule" id="MF_01667"/>
    </source>
</evidence>
<gene>
    <name evidence="1" type="primary">ghrB</name>
    <name type="ordered locus">SPAB_04530</name>
</gene>
<protein>
    <recommendedName>
        <fullName evidence="1">Glyoxylate/hydroxypyruvate reductase B</fullName>
        <ecNumber evidence="1">1.1.1.79</ecNumber>
        <ecNumber evidence="1">1.1.1.81</ecNumber>
    </recommendedName>
</protein>
<accession>A9MUT4</accession>
<sequence length="324" mass="35412">MKPSIILYKTLPDDLLHRLEAHFTVTQVPNLHPETVARHAQAFASAQGLLGTSETVNRALLEKMPALRAASTISVGYDNVEVDALTARKIVLMHTPTVLTETVADTVMALMLATARRVVDVAERVKAGEWTESIGPAWFGVDVHHKTLGIVGMGRIGMALAQRAHFGFTMPVLYHARRRHQEAEDRFNARYCDLDTLLQEADFVCVILPLTTETRHLFGTTQFARMKSSAIFINAGRGPVVDENALIAALQNGEIYAAGLDVFEHEPLSVDSPLLNMSNVVAVPHIGSATHETRYNMMACAVDNLIDALQGKIEKNCVNPQAAG</sequence>
<keyword id="KW-0963">Cytoplasm</keyword>
<keyword id="KW-0520">NAD</keyword>
<keyword id="KW-0521">NADP</keyword>
<keyword id="KW-0560">Oxidoreductase</keyword>
<comment type="function">
    <text evidence="1">Catalyzes the NADPH-dependent reduction of glyoxylate and hydroxypyruvate into glycolate and glycerate, respectively.</text>
</comment>
<comment type="catalytic activity">
    <reaction evidence="1">
        <text>glycolate + NADP(+) = glyoxylate + NADPH + H(+)</text>
        <dbReference type="Rhea" id="RHEA:10992"/>
        <dbReference type="ChEBI" id="CHEBI:15378"/>
        <dbReference type="ChEBI" id="CHEBI:29805"/>
        <dbReference type="ChEBI" id="CHEBI:36655"/>
        <dbReference type="ChEBI" id="CHEBI:57783"/>
        <dbReference type="ChEBI" id="CHEBI:58349"/>
        <dbReference type="EC" id="1.1.1.79"/>
    </reaction>
</comment>
<comment type="catalytic activity">
    <reaction evidence="1">
        <text>(R)-glycerate + NAD(+) = 3-hydroxypyruvate + NADH + H(+)</text>
        <dbReference type="Rhea" id="RHEA:17905"/>
        <dbReference type="ChEBI" id="CHEBI:15378"/>
        <dbReference type="ChEBI" id="CHEBI:16659"/>
        <dbReference type="ChEBI" id="CHEBI:17180"/>
        <dbReference type="ChEBI" id="CHEBI:57540"/>
        <dbReference type="ChEBI" id="CHEBI:57945"/>
        <dbReference type="EC" id="1.1.1.81"/>
    </reaction>
</comment>
<comment type="catalytic activity">
    <reaction evidence="1">
        <text>(R)-glycerate + NADP(+) = 3-hydroxypyruvate + NADPH + H(+)</text>
        <dbReference type="Rhea" id="RHEA:18657"/>
        <dbReference type="ChEBI" id="CHEBI:15378"/>
        <dbReference type="ChEBI" id="CHEBI:16659"/>
        <dbReference type="ChEBI" id="CHEBI:17180"/>
        <dbReference type="ChEBI" id="CHEBI:57783"/>
        <dbReference type="ChEBI" id="CHEBI:58349"/>
        <dbReference type="EC" id="1.1.1.81"/>
    </reaction>
</comment>
<comment type="subunit">
    <text evidence="1">Homodimer.</text>
</comment>
<comment type="subcellular location">
    <subcellularLocation>
        <location evidence="1">Cytoplasm</location>
    </subcellularLocation>
</comment>
<comment type="similarity">
    <text evidence="1">Belongs to the D-isomer specific 2-hydroxyacid dehydrogenase family. GhrB subfamily.</text>
</comment>
<dbReference type="EC" id="1.1.1.79" evidence="1"/>
<dbReference type="EC" id="1.1.1.81" evidence="1"/>
<dbReference type="EMBL" id="CP000886">
    <property type="protein sequence ID" value="ABX69843.1"/>
    <property type="molecule type" value="Genomic_DNA"/>
</dbReference>
<dbReference type="RefSeq" id="WP_000804693.1">
    <property type="nucleotide sequence ID" value="NC_010102.1"/>
</dbReference>
<dbReference type="SMR" id="A9MUT4"/>
<dbReference type="KEGG" id="spq:SPAB_04530"/>
<dbReference type="PATRIC" id="fig|1016998.12.peg.4263"/>
<dbReference type="HOGENOM" id="CLU_019796_1_2_6"/>
<dbReference type="BioCyc" id="SENT1016998:SPAB_RS18440-MONOMER"/>
<dbReference type="Proteomes" id="UP000008556">
    <property type="component" value="Chromosome"/>
</dbReference>
<dbReference type="GO" id="GO:0005829">
    <property type="term" value="C:cytosol"/>
    <property type="evidence" value="ECO:0007669"/>
    <property type="project" value="TreeGrafter"/>
</dbReference>
<dbReference type="GO" id="GO:0005886">
    <property type="term" value="C:plasma membrane"/>
    <property type="evidence" value="ECO:0007669"/>
    <property type="project" value="UniProtKB-UniRule"/>
</dbReference>
<dbReference type="GO" id="GO:0030267">
    <property type="term" value="F:glyoxylate reductase (NADPH) activity"/>
    <property type="evidence" value="ECO:0007669"/>
    <property type="project" value="UniProtKB-UniRule"/>
</dbReference>
<dbReference type="GO" id="GO:0008465">
    <property type="term" value="F:hydroxypyruvate reductase (NADH) activity"/>
    <property type="evidence" value="ECO:0007669"/>
    <property type="project" value="RHEA"/>
</dbReference>
<dbReference type="GO" id="GO:0120509">
    <property type="term" value="F:hydroxypyruvate reductase (NADPH) activity"/>
    <property type="evidence" value="ECO:0007669"/>
    <property type="project" value="RHEA"/>
</dbReference>
<dbReference type="GO" id="GO:0051287">
    <property type="term" value="F:NAD binding"/>
    <property type="evidence" value="ECO:0007669"/>
    <property type="project" value="InterPro"/>
</dbReference>
<dbReference type="CDD" id="cd05301">
    <property type="entry name" value="GDH"/>
    <property type="match status" value="1"/>
</dbReference>
<dbReference type="FunFam" id="3.40.50.720:FF:000026">
    <property type="entry name" value="Glyoxylate/hydroxypyruvate reductase B"/>
    <property type="match status" value="1"/>
</dbReference>
<dbReference type="Gene3D" id="3.40.50.720">
    <property type="entry name" value="NAD(P)-binding Rossmann-like Domain"/>
    <property type="match status" value="2"/>
</dbReference>
<dbReference type="HAMAP" id="MF_01667">
    <property type="entry name" value="2_Hacid_dh_C_GhrB"/>
    <property type="match status" value="1"/>
</dbReference>
<dbReference type="InterPro" id="IPR050223">
    <property type="entry name" value="D-isomer_2-hydroxyacid_DH"/>
</dbReference>
<dbReference type="InterPro" id="IPR006139">
    <property type="entry name" value="D-isomer_2_OHA_DH_cat_dom"/>
</dbReference>
<dbReference type="InterPro" id="IPR029753">
    <property type="entry name" value="D-isomer_DH_CS"/>
</dbReference>
<dbReference type="InterPro" id="IPR006140">
    <property type="entry name" value="D-isomer_DH_NAD-bd"/>
</dbReference>
<dbReference type="InterPro" id="IPR023756">
    <property type="entry name" value="Glyo/OHPyrv_Rdtase_B"/>
</dbReference>
<dbReference type="InterPro" id="IPR036291">
    <property type="entry name" value="NAD(P)-bd_dom_sf"/>
</dbReference>
<dbReference type="NCBIfam" id="NF011938">
    <property type="entry name" value="PRK15409.1"/>
    <property type="match status" value="1"/>
</dbReference>
<dbReference type="PANTHER" id="PTHR10996">
    <property type="entry name" value="2-HYDROXYACID DEHYDROGENASE-RELATED"/>
    <property type="match status" value="1"/>
</dbReference>
<dbReference type="PANTHER" id="PTHR10996:SF283">
    <property type="entry name" value="GLYOXYLATE_HYDROXYPYRUVATE REDUCTASE B"/>
    <property type="match status" value="1"/>
</dbReference>
<dbReference type="Pfam" id="PF00389">
    <property type="entry name" value="2-Hacid_dh"/>
    <property type="match status" value="1"/>
</dbReference>
<dbReference type="Pfam" id="PF02826">
    <property type="entry name" value="2-Hacid_dh_C"/>
    <property type="match status" value="1"/>
</dbReference>
<dbReference type="SUPFAM" id="SSF52283">
    <property type="entry name" value="Formate/glycerate dehydrogenase catalytic domain-like"/>
    <property type="match status" value="1"/>
</dbReference>
<dbReference type="SUPFAM" id="SSF51735">
    <property type="entry name" value="NAD(P)-binding Rossmann-fold domains"/>
    <property type="match status" value="1"/>
</dbReference>
<dbReference type="PROSITE" id="PS00670">
    <property type="entry name" value="D_2_HYDROXYACID_DH_2"/>
    <property type="match status" value="1"/>
</dbReference>
<dbReference type="PROSITE" id="PS00671">
    <property type="entry name" value="D_2_HYDROXYACID_DH_3"/>
    <property type="match status" value="1"/>
</dbReference>
<proteinExistence type="inferred from homology"/>
<reference key="1">
    <citation type="submission" date="2007-11" db="EMBL/GenBank/DDBJ databases">
        <authorList>
            <consortium name="The Salmonella enterica serovar Paratyphi B Genome Sequencing Project"/>
            <person name="McClelland M."/>
            <person name="Sanderson E.K."/>
            <person name="Porwollik S."/>
            <person name="Spieth J."/>
            <person name="Clifton W.S."/>
            <person name="Fulton R."/>
            <person name="Cordes M."/>
            <person name="Wollam A."/>
            <person name="Shah N."/>
            <person name="Pepin K."/>
            <person name="Bhonagiri V."/>
            <person name="Nash W."/>
            <person name="Johnson M."/>
            <person name="Thiruvilangam P."/>
            <person name="Wilson R."/>
        </authorList>
    </citation>
    <scope>NUCLEOTIDE SEQUENCE [LARGE SCALE GENOMIC DNA]</scope>
    <source>
        <strain>ATCC BAA-1250 / SPB7</strain>
    </source>
</reference>
<name>GHRB_SALPB</name>